<feature type="signal peptide" evidence="1">
    <location>
        <begin position="1"/>
        <end position="23"/>
    </location>
</feature>
<feature type="chain" id="PRO_0000448344" description="Inactive carboxylesterase-like protein VdtD">
    <location>
        <begin position="24"/>
        <end position="583"/>
    </location>
</feature>
<feature type="glycosylation site" description="N-linked (GlcNAc...) asparagine" evidence="2">
    <location>
        <position position="84"/>
    </location>
</feature>
<feature type="glycosylation site" description="N-linked (GlcNAc...) asparagine" evidence="2">
    <location>
        <position position="109"/>
    </location>
</feature>
<feature type="glycosylation site" description="N-linked (GlcNAc...) asparagine" evidence="2">
    <location>
        <position position="221"/>
    </location>
</feature>
<feature type="glycosylation site" description="N-linked (GlcNAc...) asparagine" evidence="2">
    <location>
        <position position="265"/>
    </location>
</feature>
<feature type="glycosylation site" description="N-linked (GlcNAc...) asparagine" evidence="2">
    <location>
        <position position="307"/>
    </location>
</feature>
<feature type="glycosylation site" description="N-linked (GlcNAc...) asparagine" evidence="2">
    <location>
        <position position="350"/>
    </location>
</feature>
<feature type="glycosylation site" description="N-linked (GlcNAc...) asparagine" evidence="2">
    <location>
        <position position="388"/>
    </location>
</feature>
<feature type="glycosylation site" description="N-linked (GlcNAc...) asparagine" evidence="2">
    <location>
        <position position="448"/>
    </location>
</feature>
<feature type="glycosylation site" description="N-linked (GlcNAc...) asparagine" evidence="2">
    <location>
        <position position="468"/>
    </location>
</feature>
<dbReference type="EMBL" id="RCNU01000014">
    <property type="protein sequence ID" value="RWQ92169.1"/>
    <property type="molecule type" value="Genomic_DNA"/>
</dbReference>
<dbReference type="SMR" id="A0A443HK52"/>
<dbReference type="STRING" id="264951.A0A443HK52"/>
<dbReference type="ESTHER" id="byssn-VdtD">
    <property type="family name" value="Fungal_carboxylesterase_lipase"/>
</dbReference>
<dbReference type="GlyCosmos" id="A0A443HK52">
    <property type="glycosylation" value="9 sites, No reported glycans"/>
</dbReference>
<dbReference type="VEuPathDB" id="FungiDB:C8Q69DRAFT_510289"/>
<dbReference type="Proteomes" id="UP000283841">
    <property type="component" value="Unassembled WGS sequence"/>
</dbReference>
<dbReference type="GO" id="GO:0140783">
    <property type="term" value="P:(M)-viriditoxin biosynthetic process"/>
    <property type="evidence" value="ECO:0000315"/>
    <property type="project" value="GO_Central"/>
</dbReference>
<dbReference type="Gene3D" id="3.40.50.1820">
    <property type="entry name" value="alpha/beta hydrolase"/>
    <property type="match status" value="1"/>
</dbReference>
<dbReference type="InterPro" id="IPR029058">
    <property type="entry name" value="AB_hydrolase_fold"/>
</dbReference>
<dbReference type="InterPro" id="IPR002018">
    <property type="entry name" value="CarbesteraseB"/>
</dbReference>
<dbReference type="InterPro" id="IPR050309">
    <property type="entry name" value="Type-B_Carboxylest/Lipase"/>
</dbReference>
<dbReference type="PANTHER" id="PTHR11559">
    <property type="entry name" value="CARBOXYLESTERASE"/>
    <property type="match status" value="1"/>
</dbReference>
<dbReference type="Pfam" id="PF00135">
    <property type="entry name" value="COesterase"/>
    <property type="match status" value="1"/>
</dbReference>
<dbReference type="SUPFAM" id="SSF53474">
    <property type="entry name" value="alpha/beta-Hydrolases"/>
    <property type="match status" value="1"/>
</dbReference>
<accession>A0A443HK52</accession>
<reference key="1">
    <citation type="journal article" date="2018" name="Front. Microbiol.">
        <title>Genomic and genetic insights into a cosmopolitan fungus, Paecilomyces variotii (Eurotiales).</title>
        <authorList>
            <person name="Urquhart A.S."/>
            <person name="Mondo S.J."/>
            <person name="Maekelae M.R."/>
            <person name="Hane J.K."/>
            <person name="Wiebenga A."/>
            <person name="He G."/>
            <person name="Mihaltcheva S."/>
            <person name="Pangilinan J."/>
            <person name="Lipzen A."/>
            <person name="Barry K."/>
            <person name="de Vries R.P."/>
            <person name="Grigoriev I.V."/>
            <person name="Idnurm A."/>
        </authorList>
    </citation>
    <scope>NUCLEOTIDE SEQUENCE [LARGE SCALE GENOMIC DNA]</scope>
    <source>
        <strain>ATCC 90900 / JCM 12815 / CBS 101075</strain>
    </source>
</reference>
<reference key="2">
    <citation type="journal article" date="2019" name="Fungal Biol. Biotechnol.">
        <title>The fungal gene cluster for biosynthesis of the antibacterial agent viriditoxin.</title>
        <authorList>
            <person name="Urquhart A.S."/>
            <person name="Hu J."/>
            <person name="Chooi Y.H."/>
            <person name="Idnurm A."/>
        </authorList>
    </citation>
    <scope>IDENTIFICATION</scope>
    <scope>FUNCTION</scope>
    <scope>DISRUPTION PHENOTYPE</scope>
    <scope>PATHWAY</scope>
</reference>
<reference key="3">
    <citation type="journal article" date="2019" name="J. Am. Chem. Soc.">
        <title>Fungal dirigent protein controls the stereoselectivity of multicopper oxidase-catalyzed phenol coupling in viriditoxin biosynthesis.</title>
        <authorList>
            <person name="Hu J."/>
            <person name="Li H."/>
            <person name="Chooi Y.H."/>
        </authorList>
    </citation>
    <scope>FUNCTION</scope>
    <scope>PATHWAY</scope>
</reference>
<proteinExistence type="inferred from homology"/>
<comment type="function">
    <text evidence="3 4">Inactive carboxylesterase-like protein; part of the gene cluster that mediates the biosynthesis of viriditoxin, one of the 'classical' secondary metabolites produced by fungi and that has antibacterial activity (PubMed:31045362, PubMed:31304040). The first step is performed by the polyketide synthase VdtA which condenses one acetyl-CoA and 6 malonyl-CoA units to form the heptaketide monomer backbone of viriditoxin (PubMed:31304040). The product of VdtA is then O-methylated on C7 by the O-methyltransferase VdtC (PubMed:31045362, PubMed:31304040). The O-methyl group is important for the stereoselective coupling of the monomers at the final step of viriditoxin biosynthesis (PubMed:31045362, PubMed:31304040). The short-chain dehydrogenase/reductase VdtF then acts as a stereospecific reductase converting the pyrone to dihydropyrone via the reduction of the C3-C4 double bond (PubMed:31045362, PubMed:31304040). The FAD-binding monooxygenase VdtE then converts the ketone group into a methyl-ester group to yield semi-viriditoxin (PubMed:31045362, PubMed:31304040). Finally, the laccase VdtB is involved in dimerization of 2 semi-viriditoxin molecules to yield the final viriditoxin (PubMed:31045362, PubMed:31304040). VdtB is responsible for the regioselective 6,6'-coupling of semi-viriditoxin, which yields (M)-viriditoxin and (P)-viriditoxin at a ratio of 1:2 (PubMed:31045362, PubMed:31304040). The non-catalytic carboxylesterase-like protein VdtD affects the stereochemistical outcome of the coupling (PubMed:31045362, PubMed:31304040). The highly reducing polyketide synthase VdtX is not involved in viriditoxin synthesis, but might possibly play a role in the production of additional metabolites not identified yet (PubMed:31045362, PubMed:31304040).</text>
</comment>
<comment type="pathway">
    <text evidence="3 4">Secondary metabolite biosynthesis.</text>
</comment>
<comment type="disruption phenotype">
    <text evidence="4">Alters the ratio of the 2 atropisomers of viriditoxin by favoring the production of the P form instead of the M form.</text>
</comment>
<comment type="similarity">
    <text evidence="6">Belongs to the type-B carboxylesterase/lipase family.</text>
</comment>
<comment type="caution">
    <text evidence="7">Lacks the conserved active serine at position 228 and does not have carboxylesterase activity.</text>
</comment>
<evidence type="ECO:0000255" key="1"/>
<evidence type="ECO:0000255" key="2">
    <source>
        <dbReference type="PROSITE-ProRule" id="PRU00498"/>
    </source>
</evidence>
<evidence type="ECO:0000269" key="3">
    <source>
    </source>
</evidence>
<evidence type="ECO:0000269" key="4">
    <source>
    </source>
</evidence>
<evidence type="ECO:0000303" key="5">
    <source>
    </source>
</evidence>
<evidence type="ECO:0000305" key="6"/>
<evidence type="ECO:0000305" key="7">
    <source>
    </source>
</evidence>
<name>VDTD1_BYSSP</name>
<organism>
    <name type="scientific">Byssochlamys spectabilis</name>
    <name type="common">Paecilomyces variotii</name>
    <dbReference type="NCBI Taxonomy" id="264951"/>
    <lineage>
        <taxon>Eukaryota</taxon>
        <taxon>Fungi</taxon>
        <taxon>Dikarya</taxon>
        <taxon>Ascomycota</taxon>
        <taxon>Pezizomycotina</taxon>
        <taxon>Eurotiomycetes</taxon>
        <taxon>Eurotiomycetidae</taxon>
        <taxon>Eurotiales</taxon>
        <taxon>Thermoascaceae</taxon>
        <taxon>Paecilomyces</taxon>
    </lineage>
</organism>
<gene>
    <name evidence="5" type="primary">VdtD</name>
    <name type="ORF">C8Q69DRAFT_510289</name>
</gene>
<protein>
    <recommendedName>
        <fullName evidence="5">Inactive carboxylesterase-like protein VdtD</fullName>
    </recommendedName>
    <alternativeName>
        <fullName evidence="5">Viriditoxin biosynthesis cluster protein D</fullName>
    </alternativeName>
</protein>
<sequence>MFMTQIVFGIAPTLLKTFSHLTALDLWRPSAPYVFDPVTSSTYLGTIADGVEEFLGIFYGQDTGGSNRFAPPKPYIPSRHSFINASTAGAACPQPYVPLPADPYTVLTNVSEDCLSLRIARPENTKSTAKLPVMVWLYGGGASVGTAYDVSYNPVGLIQQSVVNGSPVIYVAINYRVNLFGHAFSDALLKSKSTNLAMQDQRLGIEWIKNHISAFGGDPDNITLFGEDEGATYIALHILSNHEVPFHRAILQSGAAITHHDVNGNRSARNFAAVAARCNCLSDGDRQVDSQDTVDCLRRVPMEDLVNATFEVAHSVDPVNGFRAFMPAVDGYMIPDEPSNLLSRGQVPANISILAGWTRDESSMSVPTSIRTAADAASFISTQFPLLNASTIHHFLTSLYPESDFTTNSPSSPEKVTPAWRATSALHRDLTLTCPTIFQAWSLRLSSNCTTPVYLYELRQSPFATALNNSGVGYLGIVHFSDVPYVFNELERTYYITDPEENKLAQRMSASWTAFASGAFPLCERSERSLGRWEEAYGGDRVCRDRMPEHVRVKGIGDNGDQDDGDEIGKLMARCGFINRLEY</sequence>
<keyword id="KW-0325">Glycoprotein</keyword>
<keyword id="KW-1185">Reference proteome</keyword>
<keyword id="KW-0732">Signal</keyword>